<comment type="function">
    <text evidence="2">Component of the ubiquinol-cytochrome c reductase complex (complex III or cytochrome b-c1 complex) that is part of the mitochondrial respiratory chain. The b-c1 complex mediates electron transfer from ubiquinol to cytochrome c. Contributes to the generation of a proton gradient across the mitochondrial membrane that is then used for ATP synthesis.</text>
</comment>
<comment type="cofactor">
    <cofactor evidence="2">
        <name>heme b</name>
        <dbReference type="ChEBI" id="CHEBI:60344"/>
    </cofactor>
    <text evidence="2">Binds 2 heme b groups non-covalently.</text>
</comment>
<comment type="subunit">
    <text evidence="2">The cytochrome bc1 complex contains 3 respiratory subunits (MT-CYB, CYC1 and UQCRFS1), 2 core proteins (UQCRC1 and UQCRC2) and probably 6 low-molecular weight proteins.</text>
</comment>
<comment type="subcellular location">
    <subcellularLocation>
        <location evidence="2">Mitochondrion inner membrane</location>
        <topology evidence="2">Multi-pass membrane protein</topology>
    </subcellularLocation>
</comment>
<comment type="miscellaneous">
    <text evidence="1">Heme 1 (or BL or b562) is low-potential and absorbs at about 562 nm, and heme 2 (or BH or b566) is high-potential and absorbs at about 566 nm.</text>
</comment>
<comment type="similarity">
    <text evidence="3 4">Belongs to the cytochrome b family.</text>
</comment>
<comment type="caution">
    <text evidence="2">The full-length protein contains only eight transmembrane helices, not nine as predicted by bioinformatics tools.</text>
</comment>
<protein>
    <recommendedName>
        <fullName>Cytochrome b</fullName>
    </recommendedName>
    <alternativeName>
        <fullName>Complex III subunit 3</fullName>
    </alternativeName>
    <alternativeName>
        <fullName>Complex III subunit III</fullName>
    </alternativeName>
    <alternativeName>
        <fullName>Cytochrome b-c1 complex subunit 3</fullName>
    </alternativeName>
    <alternativeName>
        <fullName>Ubiquinol-cytochrome-c reductase complex cytochrome b subunit</fullName>
    </alternativeName>
</protein>
<reference key="1">
    <citation type="journal article" date="1994" name="J. Mol. Evol.">
        <title>Evolutionary analysis of cytochrome b sequences in some Perciformes: evidence for a slower rate of evolution than in mammals.</title>
        <authorList>
            <person name="Cantatore P."/>
            <person name="Roberti M."/>
            <person name="Pesole G."/>
            <person name="Ludovico A."/>
            <person name="Milella F."/>
            <person name="Gadaleta M.N."/>
            <person name="Saccone C."/>
        </authorList>
    </citation>
    <scope>NUCLEOTIDE SEQUENCE [GENOMIC DNA]</scope>
    <source>
        <tissue>Liver</tissue>
    </source>
</reference>
<proteinExistence type="inferred from homology"/>
<name>CYB_SARSA</name>
<keyword id="KW-0249">Electron transport</keyword>
<keyword id="KW-0349">Heme</keyword>
<keyword id="KW-0408">Iron</keyword>
<keyword id="KW-0472">Membrane</keyword>
<keyword id="KW-0479">Metal-binding</keyword>
<keyword id="KW-0496">Mitochondrion</keyword>
<keyword id="KW-0999">Mitochondrion inner membrane</keyword>
<keyword id="KW-0679">Respiratory chain</keyword>
<keyword id="KW-0812">Transmembrane</keyword>
<keyword id="KW-1133">Transmembrane helix</keyword>
<keyword id="KW-0813">Transport</keyword>
<keyword id="KW-0830">Ubiquinone</keyword>
<organism>
    <name type="scientific">Sarda sarda</name>
    <name type="common">Atlantic bonito</name>
    <name type="synonym">Scomber sarda</name>
    <dbReference type="NCBI Taxonomy" id="8232"/>
    <lineage>
        <taxon>Eukaryota</taxon>
        <taxon>Metazoa</taxon>
        <taxon>Chordata</taxon>
        <taxon>Craniata</taxon>
        <taxon>Vertebrata</taxon>
        <taxon>Euteleostomi</taxon>
        <taxon>Actinopterygii</taxon>
        <taxon>Neopterygii</taxon>
        <taxon>Teleostei</taxon>
        <taxon>Neoteleostei</taxon>
        <taxon>Acanthomorphata</taxon>
        <taxon>Pelagiaria</taxon>
        <taxon>Scombriformes</taxon>
        <taxon>Scombridae</taxon>
        <taxon>Sarda</taxon>
    </lineage>
</organism>
<geneLocation type="mitochondrion"/>
<dbReference type="EMBL" id="X81562">
    <property type="protein sequence ID" value="CAA57258.1"/>
    <property type="molecule type" value="Genomic_DNA"/>
</dbReference>
<dbReference type="SMR" id="Q36549"/>
<dbReference type="GO" id="GO:0005743">
    <property type="term" value="C:mitochondrial inner membrane"/>
    <property type="evidence" value="ECO:0007669"/>
    <property type="project" value="UniProtKB-SubCell"/>
</dbReference>
<dbReference type="GO" id="GO:0045275">
    <property type="term" value="C:respiratory chain complex III"/>
    <property type="evidence" value="ECO:0007669"/>
    <property type="project" value="InterPro"/>
</dbReference>
<dbReference type="GO" id="GO:0046872">
    <property type="term" value="F:metal ion binding"/>
    <property type="evidence" value="ECO:0007669"/>
    <property type="project" value="UniProtKB-KW"/>
</dbReference>
<dbReference type="GO" id="GO:0008121">
    <property type="term" value="F:ubiquinol-cytochrome-c reductase activity"/>
    <property type="evidence" value="ECO:0007669"/>
    <property type="project" value="InterPro"/>
</dbReference>
<dbReference type="GO" id="GO:0006122">
    <property type="term" value="P:mitochondrial electron transport, ubiquinol to cytochrome c"/>
    <property type="evidence" value="ECO:0007669"/>
    <property type="project" value="TreeGrafter"/>
</dbReference>
<dbReference type="CDD" id="cd00290">
    <property type="entry name" value="cytochrome_b_C"/>
    <property type="match status" value="1"/>
</dbReference>
<dbReference type="CDD" id="cd00284">
    <property type="entry name" value="Cytochrome_b_N"/>
    <property type="match status" value="1"/>
</dbReference>
<dbReference type="FunFam" id="1.20.810.10:FF:000002">
    <property type="entry name" value="Cytochrome b"/>
    <property type="match status" value="1"/>
</dbReference>
<dbReference type="Gene3D" id="1.20.810.10">
    <property type="entry name" value="Cytochrome Bc1 Complex, Chain C"/>
    <property type="match status" value="1"/>
</dbReference>
<dbReference type="InterPro" id="IPR005798">
    <property type="entry name" value="Cyt_b/b6_C"/>
</dbReference>
<dbReference type="InterPro" id="IPR036150">
    <property type="entry name" value="Cyt_b/b6_C_sf"/>
</dbReference>
<dbReference type="InterPro" id="IPR005797">
    <property type="entry name" value="Cyt_b/b6_N"/>
</dbReference>
<dbReference type="InterPro" id="IPR027387">
    <property type="entry name" value="Cytb/b6-like_sf"/>
</dbReference>
<dbReference type="InterPro" id="IPR030689">
    <property type="entry name" value="Cytochrome_b"/>
</dbReference>
<dbReference type="InterPro" id="IPR048260">
    <property type="entry name" value="Cytochrome_b_C_euk/bac"/>
</dbReference>
<dbReference type="InterPro" id="IPR048259">
    <property type="entry name" value="Cytochrome_b_N_euk/bac"/>
</dbReference>
<dbReference type="InterPro" id="IPR016174">
    <property type="entry name" value="Di-haem_cyt_TM"/>
</dbReference>
<dbReference type="PANTHER" id="PTHR19271">
    <property type="entry name" value="CYTOCHROME B"/>
    <property type="match status" value="1"/>
</dbReference>
<dbReference type="PANTHER" id="PTHR19271:SF16">
    <property type="entry name" value="CYTOCHROME B"/>
    <property type="match status" value="1"/>
</dbReference>
<dbReference type="Pfam" id="PF00032">
    <property type="entry name" value="Cytochrom_B_C"/>
    <property type="match status" value="1"/>
</dbReference>
<dbReference type="Pfam" id="PF00033">
    <property type="entry name" value="Cytochrome_B"/>
    <property type="match status" value="1"/>
</dbReference>
<dbReference type="PIRSF" id="PIRSF038885">
    <property type="entry name" value="COB"/>
    <property type="match status" value="1"/>
</dbReference>
<dbReference type="SUPFAM" id="SSF81648">
    <property type="entry name" value="a domain/subunit of cytochrome bc1 complex (Ubiquinol-cytochrome c reductase)"/>
    <property type="match status" value="1"/>
</dbReference>
<dbReference type="SUPFAM" id="SSF81342">
    <property type="entry name" value="Transmembrane di-heme cytochromes"/>
    <property type="match status" value="1"/>
</dbReference>
<dbReference type="PROSITE" id="PS51003">
    <property type="entry name" value="CYTB_CTER"/>
    <property type="match status" value="1"/>
</dbReference>
<dbReference type="PROSITE" id="PS51002">
    <property type="entry name" value="CYTB_NTER"/>
    <property type="match status" value="1"/>
</dbReference>
<evidence type="ECO:0000250" key="1"/>
<evidence type="ECO:0000250" key="2">
    <source>
        <dbReference type="UniProtKB" id="P00157"/>
    </source>
</evidence>
<evidence type="ECO:0000255" key="3">
    <source>
        <dbReference type="PROSITE-ProRule" id="PRU00967"/>
    </source>
</evidence>
<evidence type="ECO:0000255" key="4">
    <source>
        <dbReference type="PROSITE-ProRule" id="PRU00968"/>
    </source>
</evidence>
<sequence length="380" mass="42460">MASLRKTHPLLKIANDALVDLPTPSNISAWWNFGSLLGLCLISQILTGLFLAMHYTPDVESAFASVAHICRDVNFGWLIRNLHANGASFFFICIYFHIGRGLYYGSYLYKETWNIGVVLLLLVMMTAFVGYVLPWGQMSFWGATVITNLLSAVPYVGTTLVEWIWGGFSVDNATLTRFFAFHFLFPFVILAMTILHLLFLHETGSNNPIGLNSNADKISFHPYFSYKDLLGFAILLVALASLALFSPNLLGDPDNFTPANPMVTPPHIKPEWYFLFAYAILRSIPNKLGGVLALLASILVLMVVPFLHTSKQRTLTFRPVSQFLFWTLIADVAILTWIGGMPAEQPFIIIGQVASVLYFSLFLVFFPLAGWAENKILGWS</sequence>
<feature type="chain" id="PRO_0000061521" description="Cytochrome b">
    <location>
        <begin position="1"/>
        <end position="380"/>
    </location>
</feature>
<feature type="transmembrane region" description="Helical" evidence="2">
    <location>
        <begin position="33"/>
        <end position="53"/>
    </location>
</feature>
<feature type="transmembrane region" description="Helical" evidence="2">
    <location>
        <begin position="77"/>
        <end position="98"/>
    </location>
</feature>
<feature type="transmembrane region" description="Helical" evidence="2">
    <location>
        <begin position="113"/>
        <end position="133"/>
    </location>
</feature>
<feature type="transmembrane region" description="Helical" evidence="2">
    <location>
        <begin position="178"/>
        <end position="198"/>
    </location>
</feature>
<feature type="transmembrane region" description="Helical" evidence="2">
    <location>
        <begin position="226"/>
        <end position="246"/>
    </location>
</feature>
<feature type="transmembrane region" description="Helical" evidence="2">
    <location>
        <begin position="288"/>
        <end position="308"/>
    </location>
</feature>
<feature type="transmembrane region" description="Helical" evidence="2">
    <location>
        <begin position="320"/>
        <end position="340"/>
    </location>
</feature>
<feature type="transmembrane region" description="Helical" evidence="2">
    <location>
        <begin position="347"/>
        <end position="367"/>
    </location>
</feature>
<feature type="binding site" description="axial binding residue" evidence="2">
    <location>
        <position position="83"/>
    </location>
    <ligand>
        <name>heme b</name>
        <dbReference type="ChEBI" id="CHEBI:60344"/>
        <label>b562</label>
    </ligand>
    <ligandPart>
        <name>Fe</name>
        <dbReference type="ChEBI" id="CHEBI:18248"/>
    </ligandPart>
</feature>
<feature type="binding site" description="axial binding residue" evidence="2">
    <location>
        <position position="97"/>
    </location>
    <ligand>
        <name>heme b</name>
        <dbReference type="ChEBI" id="CHEBI:60344"/>
        <label>b566</label>
    </ligand>
    <ligandPart>
        <name>Fe</name>
        <dbReference type="ChEBI" id="CHEBI:18248"/>
    </ligandPart>
</feature>
<feature type="binding site" description="axial binding residue" evidence="2">
    <location>
        <position position="182"/>
    </location>
    <ligand>
        <name>heme b</name>
        <dbReference type="ChEBI" id="CHEBI:60344"/>
        <label>b562</label>
    </ligand>
    <ligandPart>
        <name>Fe</name>
        <dbReference type="ChEBI" id="CHEBI:18248"/>
    </ligandPart>
</feature>
<feature type="binding site" description="axial binding residue" evidence="2">
    <location>
        <position position="196"/>
    </location>
    <ligand>
        <name>heme b</name>
        <dbReference type="ChEBI" id="CHEBI:60344"/>
        <label>b566</label>
    </ligand>
    <ligandPart>
        <name>Fe</name>
        <dbReference type="ChEBI" id="CHEBI:18248"/>
    </ligandPart>
</feature>
<feature type="binding site" evidence="2">
    <location>
        <position position="201"/>
    </location>
    <ligand>
        <name>a ubiquinone</name>
        <dbReference type="ChEBI" id="CHEBI:16389"/>
    </ligand>
</feature>
<accession>Q36549</accession>
<gene>
    <name type="primary">mt-cyb</name>
    <name type="synonym">cob</name>
    <name type="synonym">cytb</name>
    <name type="synonym">mtcyb</name>
</gene>